<dbReference type="EC" id="1.8.4.12" evidence="1"/>
<dbReference type="EMBL" id="CP001164">
    <property type="protein sequence ID" value="ACI34971.1"/>
    <property type="molecule type" value="Genomic_DNA"/>
</dbReference>
<dbReference type="RefSeq" id="WP_001284618.1">
    <property type="nucleotide sequence ID" value="NC_011353.1"/>
</dbReference>
<dbReference type="SMR" id="B5YQ71"/>
<dbReference type="GeneID" id="93775987"/>
<dbReference type="KEGG" id="ecf:ECH74115_2502"/>
<dbReference type="HOGENOM" id="CLU_031040_8_5_6"/>
<dbReference type="GO" id="GO:0005737">
    <property type="term" value="C:cytoplasm"/>
    <property type="evidence" value="ECO:0007669"/>
    <property type="project" value="TreeGrafter"/>
</dbReference>
<dbReference type="GO" id="GO:0033743">
    <property type="term" value="F:peptide-methionine (R)-S-oxide reductase activity"/>
    <property type="evidence" value="ECO:0007669"/>
    <property type="project" value="UniProtKB-UniRule"/>
</dbReference>
<dbReference type="GO" id="GO:0008270">
    <property type="term" value="F:zinc ion binding"/>
    <property type="evidence" value="ECO:0007669"/>
    <property type="project" value="UniProtKB-UniRule"/>
</dbReference>
<dbReference type="GO" id="GO:0030091">
    <property type="term" value="P:protein repair"/>
    <property type="evidence" value="ECO:0007669"/>
    <property type="project" value="InterPro"/>
</dbReference>
<dbReference type="GO" id="GO:0006979">
    <property type="term" value="P:response to oxidative stress"/>
    <property type="evidence" value="ECO:0007669"/>
    <property type="project" value="InterPro"/>
</dbReference>
<dbReference type="FunFam" id="2.170.150.20:FF:000001">
    <property type="entry name" value="Peptide methionine sulfoxide reductase MsrB"/>
    <property type="match status" value="1"/>
</dbReference>
<dbReference type="Gene3D" id="2.170.150.20">
    <property type="entry name" value="Peptide methionine sulfoxide reductase"/>
    <property type="match status" value="1"/>
</dbReference>
<dbReference type="HAMAP" id="MF_01400">
    <property type="entry name" value="MsrB"/>
    <property type="match status" value="1"/>
</dbReference>
<dbReference type="InterPro" id="IPR028427">
    <property type="entry name" value="Met_Sox_Rdtase_MsrB"/>
</dbReference>
<dbReference type="InterPro" id="IPR002579">
    <property type="entry name" value="Met_Sox_Rdtase_MsrB_dom"/>
</dbReference>
<dbReference type="InterPro" id="IPR011057">
    <property type="entry name" value="Mss4-like_sf"/>
</dbReference>
<dbReference type="NCBIfam" id="TIGR00357">
    <property type="entry name" value="peptide-methionine (R)-S-oxide reductase MsrB"/>
    <property type="match status" value="1"/>
</dbReference>
<dbReference type="PANTHER" id="PTHR10173">
    <property type="entry name" value="METHIONINE SULFOXIDE REDUCTASE"/>
    <property type="match status" value="1"/>
</dbReference>
<dbReference type="PANTHER" id="PTHR10173:SF52">
    <property type="entry name" value="METHIONINE-R-SULFOXIDE REDUCTASE B1"/>
    <property type="match status" value="1"/>
</dbReference>
<dbReference type="Pfam" id="PF01641">
    <property type="entry name" value="SelR"/>
    <property type="match status" value="1"/>
</dbReference>
<dbReference type="SUPFAM" id="SSF51316">
    <property type="entry name" value="Mss4-like"/>
    <property type="match status" value="1"/>
</dbReference>
<dbReference type="PROSITE" id="PS51790">
    <property type="entry name" value="MSRB"/>
    <property type="match status" value="1"/>
</dbReference>
<keyword id="KW-0479">Metal-binding</keyword>
<keyword id="KW-0560">Oxidoreductase</keyword>
<keyword id="KW-0862">Zinc</keyword>
<protein>
    <recommendedName>
        <fullName evidence="1">Peptide methionine sulfoxide reductase MsrB</fullName>
        <ecNumber evidence="1">1.8.4.12</ecNumber>
    </recommendedName>
    <alternativeName>
        <fullName evidence="1">Peptide-methionine (R)-S-oxide reductase</fullName>
    </alternativeName>
</protein>
<proteinExistence type="inferred from homology"/>
<gene>
    <name evidence="1" type="primary">msrB</name>
    <name type="ordered locus">ECH74115_2502</name>
</gene>
<feature type="chain" id="PRO_1000145365" description="Peptide methionine sulfoxide reductase MsrB">
    <location>
        <begin position="1"/>
        <end position="137"/>
    </location>
</feature>
<feature type="domain" description="MsrB" evidence="2">
    <location>
        <begin position="7"/>
        <end position="129"/>
    </location>
</feature>
<feature type="active site" description="Nucleophile" evidence="2">
    <location>
        <position position="118"/>
    </location>
</feature>
<feature type="binding site" evidence="2">
    <location>
        <position position="46"/>
    </location>
    <ligand>
        <name>Zn(2+)</name>
        <dbReference type="ChEBI" id="CHEBI:29105"/>
    </ligand>
</feature>
<feature type="binding site" evidence="2">
    <location>
        <position position="49"/>
    </location>
    <ligand>
        <name>Zn(2+)</name>
        <dbReference type="ChEBI" id="CHEBI:29105"/>
    </ligand>
</feature>
<feature type="binding site" evidence="2">
    <location>
        <position position="95"/>
    </location>
    <ligand>
        <name>Zn(2+)</name>
        <dbReference type="ChEBI" id="CHEBI:29105"/>
    </ligand>
</feature>
<feature type="binding site" evidence="2">
    <location>
        <position position="98"/>
    </location>
    <ligand>
        <name>Zn(2+)</name>
        <dbReference type="ChEBI" id="CHEBI:29105"/>
    </ligand>
</feature>
<comment type="catalytic activity">
    <reaction evidence="1">
        <text>L-methionyl-[protein] + [thioredoxin]-disulfide + H2O = L-methionyl-(R)-S-oxide-[protein] + [thioredoxin]-dithiol</text>
        <dbReference type="Rhea" id="RHEA:24164"/>
        <dbReference type="Rhea" id="RHEA-COMP:10698"/>
        <dbReference type="Rhea" id="RHEA-COMP:10700"/>
        <dbReference type="Rhea" id="RHEA-COMP:12313"/>
        <dbReference type="Rhea" id="RHEA-COMP:12314"/>
        <dbReference type="ChEBI" id="CHEBI:15377"/>
        <dbReference type="ChEBI" id="CHEBI:16044"/>
        <dbReference type="ChEBI" id="CHEBI:29950"/>
        <dbReference type="ChEBI" id="CHEBI:45764"/>
        <dbReference type="ChEBI" id="CHEBI:50058"/>
        <dbReference type="EC" id="1.8.4.12"/>
    </reaction>
</comment>
<comment type="cofactor">
    <cofactor evidence="1">
        <name>Zn(2+)</name>
        <dbReference type="ChEBI" id="CHEBI:29105"/>
    </cofactor>
    <text evidence="1">Binds 1 zinc ion per subunit. The zinc ion is important for the structural integrity of the protein.</text>
</comment>
<comment type="similarity">
    <text evidence="1">Belongs to the MsrB Met sulfoxide reductase family.</text>
</comment>
<sequence>MANKPSAEELKKNLSEMQFYVTQNHGTEPPFTGRLLHNKRDGVYHCLICDAPLFHSQTKYDSGCGWPSFYEPVSEESIRYIKDLSHGMQRIEIRCGNCDAHLGHVFPDGPQPTGERYCVNSASLRFTDGENGEEING</sequence>
<organism>
    <name type="scientific">Escherichia coli O157:H7 (strain EC4115 / EHEC)</name>
    <dbReference type="NCBI Taxonomy" id="444450"/>
    <lineage>
        <taxon>Bacteria</taxon>
        <taxon>Pseudomonadati</taxon>
        <taxon>Pseudomonadota</taxon>
        <taxon>Gammaproteobacteria</taxon>
        <taxon>Enterobacterales</taxon>
        <taxon>Enterobacteriaceae</taxon>
        <taxon>Escherichia</taxon>
    </lineage>
</organism>
<evidence type="ECO:0000255" key="1">
    <source>
        <dbReference type="HAMAP-Rule" id="MF_01400"/>
    </source>
</evidence>
<evidence type="ECO:0000255" key="2">
    <source>
        <dbReference type="PROSITE-ProRule" id="PRU01126"/>
    </source>
</evidence>
<reference key="1">
    <citation type="journal article" date="2011" name="Proc. Natl. Acad. Sci. U.S.A.">
        <title>Genomic anatomy of Escherichia coli O157:H7 outbreaks.</title>
        <authorList>
            <person name="Eppinger M."/>
            <person name="Mammel M.K."/>
            <person name="Leclerc J.E."/>
            <person name="Ravel J."/>
            <person name="Cebula T.A."/>
        </authorList>
    </citation>
    <scope>NUCLEOTIDE SEQUENCE [LARGE SCALE GENOMIC DNA]</scope>
    <source>
        <strain>EC4115 / EHEC</strain>
    </source>
</reference>
<name>MSRB_ECO5E</name>
<accession>B5YQ71</accession>